<reference key="1">
    <citation type="journal article" date="1991" name="Plant Mol. Biol.">
        <title>Nucleotide sequence of a cDNA clone encoding the precursor of the 33 kDa protein of the oxygen-evolving complex from wheat.</title>
        <authorList>
            <person name="Meadows J.W."/>
            <person name="Hulford A."/>
            <person name="Raines C.A."/>
            <person name="Robinson C."/>
        </authorList>
    </citation>
    <scope>NUCLEOTIDE SEQUENCE [MRNA]</scope>
    <source>
        <strain>cv. Avalon</strain>
        <tissue>Leaf</tissue>
    </source>
</reference>
<accession>P27665</accession>
<keyword id="KW-0150">Chloroplast</keyword>
<keyword id="KW-0464">Manganese</keyword>
<keyword id="KW-0472">Membrane</keyword>
<keyword id="KW-0602">Photosynthesis</keyword>
<keyword id="KW-0604">Photosystem II</keyword>
<keyword id="KW-0934">Plastid</keyword>
<keyword id="KW-1185">Reference proteome</keyword>
<keyword id="KW-0793">Thylakoid</keyword>
<keyword id="KW-0809">Transit peptide</keyword>
<evidence type="ECO:0000250" key="1"/>
<evidence type="ECO:0000256" key="2">
    <source>
        <dbReference type="SAM" id="MobiDB-lite"/>
    </source>
</evidence>
<evidence type="ECO:0000305" key="3"/>
<protein>
    <recommendedName>
        <fullName>Oxygen-evolving enhancer protein 1, chloroplastic</fullName>
        <shortName>OEE1</shortName>
    </recommendedName>
    <alternativeName>
        <fullName>33 kDa subunit of oxygen evolving system of photosystem II</fullName>
    </alternativeName>
    <alternativeName>
        <fullName>33 kDa thylakoid membrane protein</fullName>
    </alternativeName>
    <alternativeName>
        <fullName>OEC 33 kDa subunit</fullName>
    </alternativeName>
</protein>
<proteinExistence type="evidence at transcript level"/>
<dbReference type="EMBL" id="X57408">
    <property type="protein sequence ID" value="CAA40670.1"/>
    <property type="molecule type" value="mRNA"/>
</dbReference>
<dbReference type="SMR" id="P27665"/>
<dbReference type="STRING" id="4565.P27665"/>
<dbReference type="PaxDb" id="4565-Traes_2BL_4B8B77E73.1"/>
<dbReference type="eggNOG" id="ENOG502QRXA">
    <property type="taxonomic scope" value="Eukaryota"/>
</dbReference>
<dbReference type="Proteomes" id="UP000019116">
    <property type="component" value="Unplaced"/>
</dbReference>
<dbReference type="ExpressionAtlas" id="P27665">
    <property type="expression patterns" value="baseline and differential"/>
</dbReference>
<dbReference type="GO" id="GO:0009535">
    <property type="term" value="C:chloroplast thylakoid membrane"/>
    <property type="evidence" value="ECO:0007669"/>
    <property type="project" value="UniProtKB-SubCell"/>
</dbReference>
<dbReference type="GO" id="GO:0009654">
    <property type="term" value="C:photosystem II oxygen evolving complex"/>
    <property type="evidence" value="ECO:0007669"/>
    <property type="project" value="InterPro"/>
</dbReference>
<dbReference type="GO" id="GO:0010242">
    <property type="term" value="F:oxygen evolving activity"/>
    <property type="evidence" value="ECO:0007669"/>
    <property type="project" value="InterPro"/>
</dbReference>
<dbReference type="GO" id="GO:0010207">
    <property type="term" value="P:photosystem II assembly"/>
    <property type="evidence" value="ECO:0007669"/>
    <property type="project" value="InterPro"/>
</dbReference>
<dbReference type="GO" id="GO:0042549">
    <property type="term" value="P:photosystem II stabilization"/>
    <property type="evidence" value="ECO:0007669"/>
    <property type="project" value="InterPro"/>
</dbReference>
<dbReference type="FunFam" id="3.30.2050.10:FF:000001">
    <property type="entry name" value="Oxygen-evolving enhancer protein 1, chloroplastic"/>
    <property type="match status" value="1"/>
</dbReference>
<dbReference type="Gene3D" id="3.30.2050.10">
    <property type="entry name" value="photosynthetic oxygen evolving center domain"/>
    <property type="match status" value="1"/>
</dbReference>
<dbReference type="Gene3D" id="2.40.160.30">
    <property type="entry name" value="Photosystem II, cytochrome c-550 precursor"/>
    <property type="match status" value="1"/>
</dbReference>
<dbReference type="InterPro" id="IPR011250">
    <property type="entry name" value="OMP/PagP_b-brl"/>
</dbReference>
<dbReference type="InterPro" id="IPR002628">
    <property type="entry name" value="PsbO"/>
</dbReference>
<dbReference type="PANTHER" id="PTHR34058">
    <property type="entry name" value="OXYGEN-EVOLVING ENHANCER PROTEIN 1-2, CHLOROPLASTIC"/>
    <property type="match status" value="1"/>
</dbReference>
<dbReference type="Pfam" id="PF01716">
    <property type="entry name" value="MSP"/>
    <property type="match status" value="1"/>
</dbReference>
<dbReference type="SUPFAM" id="SSF56925">
    <property type="entry name" value="OMPA-like"/>
    <property type="match status" value="1"/>
</dbReference>
<organism>
    <name type="scientific">Triticum aestivum</name>
    <name type="common">Wheat</name>
    <dbReference type="NCBI Taxonomy" id="4565"/>
    <lineage>
        <taxon>Eukaryota</taxon>
        <taxon>Viridiplantae</taxon>
        <taxon>Streptophyta</taxon>
        <taxon>Embryophyta</taxon>
        <taxon>Tracheophyta</taxon>
        <taxon>Spermatophyta</taxon>
        <taxon>Magnoliopsida</taxon>
        <taxon>Liliopsida</taxon>
        <taxon>Poales</taxon>
        <taxon>Poaceae</taxon>
        <taxon>BOP clade</taxon>
        <taxon>Pooideae</taxon>
        <taxon>Triticodae</taxon>
        <taxon>Triticeae</taxon>
        <taxon>Triticinae</taxon>
        <taxon>Triticum</taxon>
    </lineage>
</organism>
<gene>
    <name type="primary">PSBO</name>
</gene>
<name>PSBO_WHEAT</name>
<feature type="transit peptide" description="Chloroplast" evidence="1">
    <location>
        <begin position="1"/>
        <end position="79"/>
    </location>
</feature>
<feature type="chain" id="PRO_0000029564" description="Oxygen-evolving enhancer protein 1, chloroplastic">
    <location>
        <begin position="80"/>
        <end position="325"/>
    </location>
</feature>
<feature type="region of interest" description="Disordered" evidence="2">
    <location>
        <begin position="236"/>
        <end position="260"/>
    </location>
</feature>
<sequence length="325" mass="34740">MAASLQAAATVMPAKIGGRASSARPSSHVARAFGVDAGARITCSLQSDIREVASKCADAAKMAGFALATSALLVSGATAEGAPKRLTFDEIQSKTYMEVKGTGTANQCPTIDGGVDSFPFKAGKYEMKKFCLEPTSFTVKAEGIQKNEPPRFQKTKLMTRLTYTLDEMEGPLEVRRRRTLKFEEKDGIDYAAVTVQLPGGERVAFLFTVKQLVATGKPESFRPFLVPSYRGSSFLDPKGRGGSTGYDNAGALPRGGRGDEEELAKENVKNASSSTGNITLSVTKSKPETGEVIGVFESVQPSDTDLEAPKDVKIQGVWYAQLESN</sequence>
<comment type="function">
    <text evidence="1">Stabilizes the manganese cluster which is the primary site of water splitting.</text>
</comment>
<comment type="subcellular location">
    <subcellularLocation>
        <location>Plastid</location>
        <location>Chloroplast thylakoid membrane</location>
    </subcellularLocation>
    <text>Associated with the photosystem II complex.</text>
</comment>
<comment type="similarity">
    <text evidence="3">Belongs to the PsbO family.</text>
</comment>